<feature type="chain" id="PRO_1000149130" description="2-isopropylmalate synthase">
    <location>
        <begin position="1"/>
        <end position="506"/>
    </location>
</feature>
<feature type="domain" description="Pyruvate carboxyltransferase" evidence="1">
    <location>
        <begin position="4"/>
        <end position="266"/>
    </location>
</feature>
<feature type="region of interest" description="Regulatory domain" evidence="1">
    <location>
        <begin position="390"/>
        <end position="506"/>
    </location>
</feature>
<feature type="binding site" evidence="1">
    <location>
        <position position="13"/>
    </location>
    <ligand>
        <name>Mn(2+)</name>
        <dbReference type="ChEBI" id="CHEBI:29035"/>
    </ligand>
</feature>
<feature type="binding site" evidence="1">
    <location>
        <position position="201"/>
    </location>
    <ligand>
        <name>Mn(2+)</name>
        <dbReference type="ChEBI" id="CHEBI:29035"/>
    </ligand>
</feature>
<feature type="binding site" evidence="1">
    <location>
        <position position="203"/>
    </location>
    <ligand>
        <name>Mn(2+)</name>
        <dbReference type="ChEBI" id="CHEBI:29035"/>
    </ligand>
</feature>
<feature type="binding site" evidence="1">
    <location>
        <position position="237"/>
    </location>
    <ligand>
        <name>Mn(2+)</name>
        <dbReference type="ChEBI" id="CHEBI:29035"/>
    </ligand>
</feature>
<protein>
    <recommendedName>
        <fullName evidence="1">2-isopropylmalate synthase</fullName>
        <ecNumber evidence="1">2.3.3.13</ecNumber>
    </recommendedName>
    <alternativeName>
        <fullName evidence="1">Alpha-IPM synthase</fullName>
    </alternativeName>
    <alternativeName>
        <fullName evidence="1">Alpha-isopropylmalate synthase</fullName>
    </alternativeName>
</protein>
<proteinExistence type="inferred from homology"/>
<comment type="function">
    <text evidence="1">Catalyzes the condensation of the acetyl group of acetyl-CoA with 3-methyl-2-oxobutanoate (2-ketoisovalerate) to form 3-carboxy-3-hydroxy-4-methylpentanoate (2-isopropylmalate).</text>
</comment>
<comment type="catalytic activity">
    <reaction evidence="1">
        <text>3-methyl-2-oxobutanoate + acetyl-CoA + H2O = (2S)-2-isopropylmalate + CoA + H(+)</text>
        <dbReference type="Rhea" id="RHEA:21524"/>
        <dbReference type="ChEBI" id="CHEBI:1178"/>
        <dbReference type="ChEBI" id="CHEBI:11851"/>
        <dbReference type="ChEBI" id="CHEBI:15377"/>
        <dbReference type="ChEBI" id="CHEBI:15378"/>
        <dbReference type="ChEBI" id="CHEBI:57287"/>
        <dbReference type="ChEBI" id="CHEBI:57288"/>
        <dbReference type="EC" id="2.3.3.13"/>
    </reaction>
</comment>
<comment type="cofactor">
    <cofactor evidence="1">
        <name>Mn(2+)</name>
        <dbReference type="ChEBI" id="CHEBI:29035"/>
    </cofactor>
</comment>
<comment type="pathway">
    <text evidence="1">Amino-acid biosynthesis; L-leucine biosynthesis; L-leucine from 3-methyl-2-oxobutanoate: step 1/4.</text>
</comment>
<comment type="subunit">
    <text evidence="1">Homodimer.</text>
</comment>
<comment type="subcellular location">
    <subcellularLocation>
        <location evidence="1">Cytoplasm</location>
    </subcellularLocation>
</comment>
<comment type="similarity">
    <text evidence="1">Belongs to the alpha-IPM synthase/homocitrate synthase family. LeuA type 1 subfamily.</text>
</comment>
<dbReference type="EC" id="2.3.3.13" evidence="1"/>
<dbReference type="EMBL" id="AE017194">
    <property type="protein sequence ID" value="AAS40449.1"/>
    <property type="molecule type" value="Genomic_DNA"/>
</dbReference>
<dbReference type="SMR" id="Q73BA0"/>
<dbReference type="DNASU" id="2752068"/>
<dbReference type="KEGG" id="bca:BCE_1520"/>
<dbReference type="HOGENOM" id="CLU_022158_0_1_9"/>
<dbReference type="UniPathway" id="UPA00048">
    <property type="reaction ID" value="UER00070"/>
</dbReference>
<dbReference type="Proteomes" id="UP000002527">
    <property type="component" value="Chromosome"/>
</dbReference>
<dbReference type="GO" id="GO:0005737">
    <property type="term" value="C:cytoplasm"/>
    <property type="evidence" value="ECO:0007669"/>
    <property type="project" value="UniProtKB-SubCell"/>
</dbReference>
<dbReference type="GO" id="GO:0003852">
    <property type="term" value="F:2-isopropylmalate synthase activity"/>
    <property type="evidence" value="ECO:0007669"/>
    <property type="project" value="UniProtKB-UniRule"/>
</dbReference>
<dbReference type="GO" id="GO:0003985">
    <property type="term" value="F:acetyl-CoA C-acetyltransferase activity"/>
    <property type="evidence" value="ECO:0007669"/>
    <property type="project" value="UniProtKB-UniRule"/>
</dbReference>
<dbReference type="GO" id="GO:0030145">
    <property type="term" value="F:manganese ion binding"/>
    <property type="evidence" value="ECO:0007669"/>
    <property type="project" value="UniProtKB-UniRule"/>
</dbReference>
<dbReference type="GO" id="GO:0009098">
    <property type="term" value="P:L-leucine biosynthetic process"/>
    <property type="evidence" value="ECO:0007669"/>
    <property type="project" value="UniProtKB-UniRule"/>
</dbReference>
<dbReference type="CDD" id="cd07940">
    <property type="entry name" value="DRE_TIM_IPMS"/>
    <property type="match status" value="1"/>
</dbReference>
<dbReference type="FunFam" id="3.20.20.70:FF:000287">
    <property type="entry name" value="2-isopropylmalate synthase"/>
    <property type="match status" value="1"/>
</dbReference>
<dbReference type="FunFam" id="3.30.160.270:FF:000003">
    <property type="entry name" value="2-isopropylmalate synthase"/>
    <property type="match status" value="1"/>
</dbReference>
<dbReference type="Gene3D" id="3.30.160.270">
    <property type="match status" value="1"/>
</dbReference>
<dbReference type="Gene3D" id="3.20.20.70">
    <property type="entry name" value="Aldolase class I"/>
    <property type="match status" value="1"/>
</dbReference>
<dbReference type="HAMAP" id="MF_01025">
    <property type="entry name" value="LeuA_type1"/>
    <property type="match status" value="1"/>
</dbReference>
<dbReference type="InterPro" id="IPR050073">
    <property type="entry name" value="2-IPM_HCS-like"/>
</dbReference>
<dbReference type="InterPro" id="IPR013709">
    <property type="entry name" value="2-isopropylmalate_synth_dimer"/>
</dbReference>
<dbReference type="InterPro" id="IPR002034">
    <property type="entry name" value="AIPM/Hcit_synth_CS"/>
</dbReference>
<dbReference type="InterPro" id="IPR013785">
    <property type="entry name" value="Aldolase_TIM"/>
</dbReference>
<dbReference type="InterPro" id="IPR054691">
    <property type="entry name" value="LeuA/HCS_post-cat"/>
</dbReference>
<dbReference type="InterPro" id="IPR036230">
    <property type="entry name" value="LeuA_allosteric_dom_sf"/>
</dbReference>
<dbReference type="InterPro" id="IPR005671">
    <property type="entry name" value="LeuA_bact_synth"/>
</dbReference>
<dbReference type="InterPro" id="IPR000891">
    <property type="entry name" value="PYR_CT"/>
</dbReference>
<dbReference type="NCBIfam" id="TIGR00973">
    <property type="entry name" value="leuA_bact"/>
    <property type="match status" value="1"/>
</dbReference>
<dbReference type="NCBIfam" id="NF002086">
    <property type="entry name" value="PRK00915.1-3"/>
    <property type="match status" value="1"/>
</dbReference>
<dbReference type="NCBIfam" id="NF002088">
    <property type="entry name" value="PRK00915.1-5"/>
    <property type="match status" value="1"/>
</dbReference>
<dbReference type="PANTHER" id="PTHR10277:SF9">
    <property type="entry name" value="2-ISOPROPYLMALATE SYNTHASE 1, CHLOROPLASTIC-RELATED"/>
    <property type="match status" value="1"/>
</dbReference>
<dbReference type="PANTHER" id="PTHR10277">
    <property type="entry name" value="HOMOCITRATE SYNTHASE-RELATED"/>
    <property type="match status" value="1"/>
</dbReference>
<dbReference type="Pfam" id="PF22617">
    <property type="entry name" value="HCS_D2"/>
    <property type="match status" value="1"/>
</dbReference>
<dbReference type="Pfam" id="PF00682">
    <property type="entry name" value="HMGL-like"/>
    <property type="match status" value="1"/>
</dbReference>
<dbReference type="Pfam" id="PF08502">
    <property type="entry name" value="LeuA_dimer"/>
    <property type="match status" value="1"/>
</dbReference>
<dbReference type="SMART" id="SM00917">
    <property type="entry name" value="LeuA_dimer"/>
    <property type="match status" value="1"/>
</dbReference>
<dbReference type="SUPFAM" id="SSF110921">
    <property type="entry name" value="2-isopropylmalate synthase LeuA, allosteric (dimerisation) domain"/>
    <property type="match status" value="1"/>
</dbReference>
<dbReference type="SUPFAM" id="SSF51569">
    <property type="entry name" value="Aldolase"/>
    <property type="match status" value="1"/>
</dbReference>
<dbReference type="PROSITE" id="PS00815">
    <property type="entry name" value="AIPM_HOMOCIT_SYNTH_1"/>
    <property type="match status" value="1"/>
</dbReference>
<dbReference type="PROSITE" id="PS00816">
    <property type="entry name" value="AIPM_HOMOCIT_SYNTH_2"/>
    <property type="match status" value="1"/>
</dbReference>
<dbReference type="PROSITE" id="PS50991">
    <property type="entry name" value="PYR_CT"/>
    <property type="match status" value="1"/>
</dbReference>
<accession>Q73BA0</accession>
<organism>
    <name type="scientific">Bacillus cereus (strain ATCC 10987 / NRS 248)</name>
    <dbReference type="NCBI Taxonomy" id="222523"/>
    <lineage>
        <taxon>Bacteria</taxon>
        <taxon>Bacillati</taxon>
        <taxon>Bacillota</taxon>
        <taxon>Bacilli</taxon>
        <taxon>Bacillales</taxon>
        <taxon>Bacillaceae</taxon>
        <taxon>Bacillus</taxon>
        <taxon>Bacillus cereus group</taxon>
    </lineage>
</organism>
<keyword id="KW-0028">Amino-acid biosynthesis</keyword>
<keyword id="KW-0100">Branched-chain amino acid biosynthesis</keyword>
<keyword id="KW-0963">Cytoplasm</keyword>
<keyword id="KW-0432">Leucine biosynthesis</keyword>
<keyword id="KW-0464">Manganese</keyword>
<keyword id="KW-0479">Metal-binding</keyword>
<keyword id="KW-0808">Transferase</keyword>
<gene>
    <name evidence="1" type="primary">leuA</name>
    <name type="ordered locus">BCE_1520</name>
</gene>
<name>LEU1_BACC1</name>
<reference key="1">
    <citation type="journal article" date="2004" name="Nucleic Acids Res.">
        <title>The genome sequence of Bacillus cereus ATCC 10987 reveals metabolic adaptations and a large plasmid related to Bacillus anthracis pXO1.</title>
        <authorList>
            <person name="Rasko D.A."/>
            <person name="Ravel J."/>
            <person name="Oekstad O.A."/>
            <person name="Helgason E."/>
            <person name="Cer R.Z."/>
            <person name="Jiang L."/>
            <person name="Shores K.A."/>
            <person name="Fouts D.E."/>
            <person name="Tourasse N.J."/>
            <person name="Angiuoli S.V."/>
            <person name="Kolonay J.F."/>
            <person name="Nelson W.C."/>
            <person name="Kolstoe A.-B."/>
            <person name="Fraser C.M."/>
            <person name="Read T.D."/>
        </authorList>
    </citation>
    <scope>NUCLEOTIDE SEQUENCE [LARGE SCALE GENOMIC DNA]</scope>
    <source>
        <strain>ATCC 10987 / NRS 248</strain>
    </source>
</reference>
<sequence>MKQILFMDTTLRDGEQSPGVNLNEQEKLQIARQLERLGIHVMEAGFAAASEGDFQSVKRIANTIQNATVMSLARAKESDIRRAYEAVKGAVSPRLHVFLATSDIHMKYKLCMSKEDVLDSIHRSVTLGKSLFPTVQFSAEDATRTARDFLAEAVEVAIRAGANVINIPDTVGYTNPEEYYSLFKYLQESVPSYEKAIFSCHCHDDLGMAVANSLAAVEGGALQVEGTINGIGERAGNAALEEVAVALHIRKDFYQAEPSMTLKEIKATSTLVSRLTGMVVPKNKAIVGANAFAHESGIHQDGVLKEVTTYEIIEPELVGESQNLFVLGKHSGRHAFTEKMKELGYEFTTEERDAVFEAFKKLADRKKEITEEDLRALMLGEAAFAAQQYNITQLQVHFVSNSTQCATVVLKDEEGNVFEDAATGSGSIEAIYNAIQRILGLECELADYRIQSITQGQDALAHVHVELKEGTHQVSGFGVAQDVLEASARAYVHAAGKLKSFIQLVK</sequence>
<evidence type="ECO:0000255" key="1">
    <source>
        <dbReference type="HAMAP-Rule" id="MF_01025"/>
    </source>
</evidence>